<gene>
    <name evidence="1" type="primary">ribH</name>
    <name type="ordered locus">PPA1749</name>
</gene>
<accession>Q6A6Y6</accession>
<name>RISB_CUTAK</name>
<evidence type="ECO:0000255" key="1">
    <source>
        <dbReference type="HAMAP-Rule" id="MF_00178"/>
    </source>
</evidence>
<protein>
    <recommendedName>
        <fullName evidence="1">6,7-dimethyl-8-ribityllumazine synthase</fullName>
        <shortName evidence="1">DMRL synthase</shortName>
        <shortName evidence="1">LS</shortName>
        <shortName evidence="1">Lumazine synthase</shortName>
        <ecNumber evidence="1">2.5.1.78</ecNumber>
    </recommendedName>
</protein>
<keyword id="KW-0686">Riboflavin biosynthesis</keyword>
<keyword id="KW-0808">Transferase</keyword>
<reference key="1">
    <citation type="journal article" date="2004" name="Science">
        <title>The complete genome sequence of Propionibacterium acnes, a commensal of human skin.</title>
        <authorList>
            <person name="Brueggemann H."/>
            <person name="Henne A."/>
            <person name="Hoster F."/>
            <person name="Liesegang H."/>
            <person name="Wiezer A."/>
            <person name="Strittmatter A."/>
            <person name="Hujer S."/>
            <person name="Duerre P."/>
            <person name="Gottschalk G."/>
        </authorList>
    </citation>
    <scope>NUCLEOTIDE SEQUENCE [LARGE SCALE GENOMIC DNA]</scope>
    <source>
        <strain>DSM 16379 / KPA171202</strain>
    </source>
</reference>
<proteinExistence type="inferred from homology"/>
<organism>
    <name type="scientific">Cutibacterium acnes (strain DSM 16379 / KPA171202)</name>
    <name type="common">Propionibacterium acnes</name>
    <dbReference type="NCBI Taxonomy" id="267747"/>
    <lineage>
        <taxon>Bacteria</taxon>
        <taxon>Bacillati</taxon>
        <taxon>Actinomycetota</taxon>
        <taxon>Actinomycetes</taxon>
        <taxon>Propionibacteriales</taxon>
        <taxon>Propionibacteriaceae</taxon>
        <taxon>Cutibacterium</taxon>
    </lineage>
</organism>
<sequence length="166" mass="16783">MSSRTTLGLSAPDLSGLDGSGLKVAVVAAQWHGTVMTGLLDGALRGLVDSGVHDPAVIRVPGSFELPVACASLADHFDALVALGVIIRGGTPHFDYVCDAATRGITDVAVRTKTPIGFGILTCDDEAQALDRAGLEGSHEDKGYEAAQAAIATLTALSTALASGPS</sequence>
<feature type="chain" id="PRO_1000077242" description="6,7-dimethyl-8-ribityllumazine synthase">
    <location>
        <begin position="1"/>
        <end position="166"/>
    </location>
</feature>
<feature type="active site" description="Proton donor" evidence="1">
    <location>
        <position position="93"/>
    </location>
</feature>
<feature type="binding site" evidence="1">
    <location>
        <position position="31"/>
    </location>
    <ligand>
        <name>5-amino-6-(D-ribitylamino)uracil</name>
        <dbReference type="ChEBI" id="CHEBI:15934"/>
    </ligand>
</feature>
<feature type="binding site" evidence="1">
    <location>
        <begin position="63"/>
        <end position="65"/>
    </location>
    <ligand>
        <name>5-amino-6-(D-ribitylamino)uracil</name>
        <dbReference type="ChEBI" id="CHEBI:15934"/>
    </ligand>
</feature>
<feature type="binding site" evidence="1">
    <location>
        <begin position="85"/>
        <end position="87"/>
    </location>
    <ligand>
        <name>5-amino-6-(D-ribitylamino)uracil</name>
        <dbReference type="ChEBI" id="CHEBI:15934"/>
    </ligand>
</feature>
<feature type="binding site" evidence="1">
    <location>
        <begin position="90"/>
        <end position="91"/>
    </location>
    <ligand>
        <name>(2S)-2-hydroxy-3-oxobutyl phosphate</name>
        <dbReference type="ChEBI" id="CHEBI:58830"/>
    </ligand>
</feature>
<feature type="binding site" evidence="1">
    <location>
        <position position="118"/>
    </location>
    <ligand>
        <name>5-amino-6-(D-ribitylamino)uracil</name>
        <dbReference type="ChEBI" id="CHEBI:15934"/>
    </ligand>
</feature>
<feature type="binding site" evidence="1">
    <location>
        <position position="132"/>
    </location>
    <ligand>
        <name>(2S)-2-hydroxy-3-oxobutyl phosphate</name>
        <dbReference type="ChEBI" id="CHEBI:58830"/>
    </ligand>
</feature>
<comment type="function">
    <text evidence="1">Catalyzes the formation of 6,7-dimethyl-8-ribityllumazine by condensation of 5-amino-6-(D-ribitylamino)uracil with 3,4-dihydroxy-2-butanone 4-phosphate. This is the penultimate step in the biosynthesis of riboflavin.</text>
</comment>
<comment type="catalytic activity">
    <reaction evidence="1">
        <text>(2S)-2-hydroxy-3-oxobutyl phosphate + 5-amino-6-(D-ribitylamino)uracil = 6,7-dimethyl-8-(1-D-ribityl)lumazine + phosphate + 2 H2O + H(+)</text>
        <dbReference type="Rhea" id="RHEA:26152"/>
        <dbReference type="ChEBI" id="CHEBI:15377"/>
        <dbReference type="ChEBI" id="CHEBI:15378"/>
        <dbReference type="ChEBI" id="CHEBI:15934"/>
        <dbReference type="ChEBI" id="CHEBI:43474"/>
        <dbReference type="ChEBI" id="CHEBI:58201"/>
        <dbReference type="ChEBI" id="CHEBI:58830"/>
        <dbReference type="EC" id="2.5.1.78"/>
    </reaction>
</comment>
<comment type="pathway">
    <text evidence="1">Cofactor biosynthesis; riboflavin biosynthesis; riboflavin from 2-hydroxy-3-oxobutyl phosphate and 5-amino-6-(D-ribitylamino)uracil: step 1/2.</text>
</comment>
<comment type="similarity">
    <text evidence="1">Belongs to the DMRL synthase family.</text>
</comment>
<dbReference type="EC" id="2.5.1.78" evidence="1"/>
<dbReference type="EMBL" id="AE017283">
    <property type="protein sequence ID" value="AAT83478.1"/>
    <property type="molecule type" value="Genomic_DNA"/>
</dbReference>
<dbReference type="RefSeq" id="WP_002516069.1">
    <property type="nucleotide sequence ID" value="NZ_CP025935.1"/>
</dbReference>
<dbReference type="SMR" id="Q6A6Y6"/>
<dbReference type="EnsemblBacteria" id="AAT83478">
    <property type="protein sequence ID" value="AAT83478"/>
    <property type="gene ID" value="PPA1749"/>
</dbReference>
<dbReference type="GeneID" id="92857702"/>
<dbReference type="KEGG" id="pac:PPA1749"/>
<dbReference type="eggNOG" id="COG0054">
    <property type="taxonomic scope" value="Bacteria"/>
</dbReference>
<dbReference type="HOGENOM" id="CLU_089358_1_2_11"/>
<dbReference type="UniPathway" id="UPA00275">
    <property type="reaction ID" value="UER00404"/>
</dbReference>
<dbReference type="Proteomes" id="UP000000603">
    <property type="component" value="Chromosome"/>
</dbReference>
<dbReference type="GO" id="GO:0005829">
    <property type="term" value="C:cytosol"/>
    <property type="evidence" value="ECO:0007669"/>
    <property type="project" value="TreeGrafter"/>
</dbReference>
<dbReference type="GO" id="GO:0009349">
    <property type="term" value="C:riboflavin synthase complex"/>
    <property type="evidence" value="ECO:0007669"/>
    <property type="project" value="InterPro"/>
</dbReference>
<dbReference type="GO" id="GO:0000906">
    <property type="term" value="F:6,7-dimethyl-8-ribityllumazine synthase activity"/>
    <property type="evidence" value="ECO:0007669"/>
    <property type="project" value="UniProtKB-UniRule"/>
</dbReference>
<dbReference type="GO" id="GO:0009231">
    <property type="term" value="P:riboflavin biosynthetic process"/>
    <property type="evidence" value="ECO:0007669"/>
    <property type="project" value="UniProtKB-UniRule"/>
</dbReference>
<dbReference type="CDD" id="cd09209">
    <property type="entry name" value="Lumazine_synthase-I"/>
    <property type="match status" value="1"/>
</dbReference>
<dbReference type="Gene3D" id="3.40.50.960">
    <property type="entry name" value="Lumazine/riboflavin synthase"/>
    <property type="match status" value="1"/>
</dbReference>
<dbReference type="HAMAP" id="MF_00178">
    <property type="entry name" value="Lumazine_synth"/>
    <property type="match status" value="1"/>
</dbReference>
<dbReference type="InterPro" id="IPR034964">
    <property type="entry name" value="LS"/>
</dbReference>
<dbReference type="InterPro" id="IPR002180">
    <property type="entry name" value="LS/RS"/>
</dbReference>
<dbReference type="InterPro" id="IPR036467">
    <property type="entry name" value="LS/RS_sf"/>
</dbReference>
<dbReference type="NCBIfam" id="TIGR00114">
    <property type="entry name" value="lumazine-synth"/>
    <property type="match status" value="1"/>
</dbReference>
<dbReference type="PANTHER" id="PTHR21058:SF0">
    <property type="entry name" value="6,7-DIMETHYL-8-RIBITYLLUMAZINE SYNTHASE"/>
    <property type="match status" value="1"/>
</dbReference>
<dbReference type="PANTHER" id="PTHR21058">
    <property type="entry name" value="6,7-DIMETHYL-8-RIBITYLLUMAZINE SYNTHASE DMRL SYNTHASE LUMAZINE SYNTHASE"/>
    <property type="match status" value="1"/>
</dbReference>
<dbReference type="Pfam" id="PF00885">
    <property type="entry name" value="DMRL_synthase"/>
    <property type="match status" value="1"/>
</dbReference>
<dbReference type="SUPFAM" id="SSF52121">
    <property type="entry name" value="Lumazine synthase"/>
    <property type="match status" value="1"/>
</dbReference>